<feature type="chain" id="PRO_0000292194" description="GMP synthase [glutamine-hydrolyzing] subunit A">
    <location>
        <begin position="1"/>
        <end position="189"/>
    </location>
</feature>
<feature type="domain" description="Glutamine amidotransferase type-1" evidence="1">
    <location>
        <begin position="5"/>
        <end position="189"/>
    </location>
</feature>
<feature type="active site" description="Nucleophile" evidence="1">
    <location>
        <position position="79"/>
    </location>
</feature>
<feature type="active site" evidence="1">
    <location>
        <position position="166"/>
    </location>
</feature>
<feature type="active site" evidence="1">
    <location>
        <position position="168"/>
    </location>
</feature>
<sequence length="189" mass="21080">MKELKIIVINNYGQFCHLIHRTVRDLDMDTKIVANTTSVEDILDEEPDGIILSGGPSMERVGSCQEYVESIDIPILGICLGHQLIAQTFGGHTGAGKLGGYAAIDVEVIEEDDILKGLGPRTSVWASHADEVTVLPDEFIHLARSDVCEIEAMRHEERPIYGVQWHPEVAHTDKGEELFMNFFKVCEDY</sequence>
<comment type="function">
    <text evidence="1">Catalyzes the synthesis of GMP from XMP.</text>
</comment>
<comment type="catalytic activity">
    <reaction evidence="1">
        <text>XMP + L-glutamine + ATP + H2O = GMP + L-glutamate + AMP + diphosphate + 2 H(+)</text>
        <dbReference type="Rhea" id="RHEA:11680"/>
        <dbReference type="ChEBI" id="CHEBI:15377"/>
        <dbReference type="ChEBI" id="CHEBI:15378"/>
        <dbReference type="ChEBI" id="CHEBI:29985"/>
        <dbReference type="ChEBI" id="CHEBI:30616"/>
        <dbReference type="ChEBI" id="CHEBI:33019"/>
        <dbReference type="ChEBI" id="CHEBI:57464"/>
        <dbReference type="ChEBI" id="CHEBI:58115"/>
        <dbReference type="ChEBI" id="CHEBI:58359"/>
        <dbReference type="ChEBI" id="CHEBI:456215"/>
        <dbReference type="EC" id="6.3.5.2"/>
    </reaction>
</comment>
<comment type="pathway">
    <text evidence="1">Purine metabolism; GMP biosynthesis; GMP from XMP (L-Gln route): step 1/1.</text>
</comment>
<comment type="subunit">
    <text evidence="1">Heterodimer composed of a glutamine amidotransferase subunit (A) and a GMP-binding subunit (B).</text>
</comment>
<proteinExistence type="inferred from homology"/>
<gene>
    <name evidence="1" type="primary">guaAA</name>
    <name type="ordered locus">Mbur_2002</name>
</gene>
<accession>Q12UJ5</accession>
<evidence type="ECO:0000255" key="1">
    <source>
        <dbReference type="HAMAP-Rule" id="MF_01510"/>
    </source>
</evidence>
<dbReference type="EC" id="6.3.5.2" evidence="1"/>
<dbReference type="EMBL" id="CP000300">
    <property type="protein sequence ID" value="ABE52881.1"/>
    <property type="molecule type" value="Genomic_DNA"/>
</dbReference>
<dbReference type="RefSeq" id="WP_011500022.1">
    <property type="nucleotide sequence ID" value="NC_007955.1"/>
</dbReference>
<dbReference type="SMR" id="Q12UJ5"/>
<dbReference type="STRING" id="259564.Mbur_2002"/>
<dbReference type="MEROPS" id="C26.A31"/>
<dbReference type="GeneID" id="3996954"/>
<dbReference type="KEGG" id="mbu:Mbur_2002"/>
<dbReference type="HOGENOM" id="CLU_014340_1_4_2"/>
<dbReference type="OrthoDB" id="10772at2157"/>
<dbReference type="UniPathway" id="UPA00189">
    <property type="reaction ID" value="UER00296"/>
</dbReference>
<dbReference type="Proteomes" id="UP000001979">
    <property type="component" value="Chromosome"/>
</dbReference>
<dbReference type="GO" id="GO:0005829">
    <property type="term" value="C:cytosol"/>
    <property type="evidence" value="ECO:0007669"/>
    <property type="project" value="TreeGrafter"/>
</dbReference>
<dbReference type="GO" id="GO:0005524">
    <property type="term" value="F:ATP binding"/>
    <property type="evidence" value="ECO:0007669"/>
    <property type="project" value="UniProtKB-KW"/>
</dbReference>
<dbReference type="GO" id="GO:0003921">
    <property type="term" value="F:GMP synthase activity"/>
    <property type="evidence" value="ECO:0007669"/>
    <property type="project" value="TreeGrafter"/>
</dbReference>
<dbReference type="CDD" id="cd01742">
    <property type="entry name" value="GATase1_GMP_Synthase"/>
    <property type="match status" value="1"/>
</dbReference>
<dbReference type="FunFam" id="3.40.50.880:FF:000047">
    <property type="entry name" value="GMP synthase [glutamine-hydrolyzing] subunit A"/>
    <property type="match status" value="1"/>
</dbReference>
<dbReference type="Gene3D" id="3.40.50.880">
    <property type="match status" value="1"/>
</dbReference>
<dbReference type="HAMAP" id="MF_01510">
    <property type="entry name" value="GMP_synthase_A"/>
    <property type="match status" value="1"/>
</dbReference>
<dbReference type="InterPro" id="IPR029062">
    <property type="entry name" value="Class_I_gatase-like"/>
</dbReference>
<dbReference type="InterPro" id="IPR017926">
    <property type="entry name" value="GATASE"/>
</dbReference>
<dbReference type="InterPro" id="IPR004739">
    <property type="entry name" value="GMP_synth_GATase"/>
</dbReference>
<dbReference type="InterPro" id="IPR023686">
    <property type="entry name" value="GMP_synthase_A"/>
</dbReference>
<dbReference type="NCBIfam" id="TIGR00888">
    <property type="entry name" value="guaA_Nterm"/>
    <property type="match status" value="1"/>
</dbReference>
<dbReference type="NCBIfam" id="NF001975">
    <property type="entry name" value="PRK00758.1"/>
    <property type="match status" value="1"/>
</dbReference>
<dbReference type="PANTHER" id="PTHR11922:SF2">
    <property type="entry name" value="GMP SYNTHASE [GLUTAMINE-HYDROLYZING]"/>
    <property type="match status" value="1"/>
</dbReference>
<dbReference type="PANTHER" id="PTHR11922">
    <property type="entry name" value="GMP SYNTHASE-RELATED"/>
    <property type="match status" value="1"/>
</dbReference>
<dbReference type="Pfam" id="PF00117">
    <property type="entry name" value="GATase"/>
    <property type="match status" value="1"/>
</dbReference>
<dbReference type="PRINTS" id="PR00097">
    <property type="entry name" value="ANTSNTHASEII"/>
</dbReference>
<dbReference type="PRINTS" id="PR00096">
    <property type="entry name" value="GATASE"/>
</dbReference>
<dbReference type="SUPFAM" id="SSF52317">
    <property type="entry name" value="Class I glutamine amidotransferase-like"/>
    <property type="match status" value="1"/>
</dbReference>
<dbReference type="PROSITE" id="PS51273">
    <property type="entry name" value="GATASE_TYPE_1"/>
    <property type="match status" value="1"/>
</dbReference>
<protein>
    <recommendedName>
        <fullName evidence="1">GMP synthase [glutamine-hydrolyzing] subunit A</fullName>
        <ecNumber evidence="1">6.3.5.2</ecNumber>
    </recommendedName>
    <alternativeName>
        <fullName evidence="1">Glutamine amidotransferase</fullName>
    </alternativeName>
</protein>
<name>GUAAA_METBU</name>
<organism>
    <name type="scientific">Methanococcoides burtonii (strain DSM 6242 / NBRC 107633 / OCM 468 / ACE-M)</name>
    <dbReference type="NCBI Taxonomy" id="259564"/>
    <lineage>
        <taxon>Archaea</taxon>
        <taxon>Methanobacteriati</taxon>
        <taxon>Methanobacteriota</taxon>
        <taxon>Stenosarchaea group</taxon>
        <taxon>Methanomicrobia</taxon>
        <taxon>Methanosarcinales</taxon>
        <taxon>Methanosarcinaceae</taxon>
        <taxon>Methanococcoides</taxon>
    </lineage>
</organism>
<keyword id="KW-0067">ATP-binding</keyword>
<keyword id="KW-0315">Glutamine amidotransferase</keyword>
<keyword id="KW-0332">GMP biosynthesis</keyword>
<keyword id="KW-0436">Ligase</keyword>
<keyword id="KW-0547">Nucleotide-binding</keyword>
<keyword id="KW-0658">Purine biosynthesis</keyword>
<reference key="1">
    <citation type="journal article" date="2009" name="ISME J.">
        <title>The genome sequence of the psychrophilic archaeon, Methanococcoides burtonii: the role of genome evolution in cold adaptation.</title>
        <authorList>
            <person name="Allen M.A."/>
            <person name="Lauro F.M."/>
            <person name="Williams T.J."/>
            <person name="Burg D."/>
            <person name="Siddiqui K.S."/>
            <person name="De Francisci D."/>
            <person name="Chong K.W."/>
            <person name="Pilak O."/>
            <person name="Chew H.H."/>
            <person name="De Maere M.Z."/>
            <person name="Ting L."/>
            <person name="Katrib M."/>
            <person name="Ng C."/>
            <person name="Sowers K.R."/>
            <person name="Galperin M.Y."/>
            <person name="Anderson I.J."/>
            <person name="Ivanova N."/>
            <person name="Dalin E."/>
            <person name="Martinez M."/>
            <person name="Lapidus A."/>
            <person name="Hauser L."/>
            <person name="Land M."/>
            <person name="Thomas T."/>
            <person name="Cavicchioli R."/>
        </authorList>
    </citation>
    <scope>NUCLEOTIDE SEQUENCE [LARGE SCALE GENOMIC DNA]</scope>
    <source>
        <strain>DSM 6242 / NBRC 107633 / OCM 468 / ACE-M</strain>
    </source>
</reference>